<gene>
    <name type="ordered locus">MT2955</name>
</gene>
<name>HTMR_MYCTO</name>
<protein>
    <recommendedName>
        <fullName evidence="1">HTH-type transcriptional repressor MT2955</fullName>
    </recommendedName>
</protein>
<sequence length="139" mass="14690">MGLADDAPLGYLLYRVGAVLRPEVSAALSPLGLTLPEFVCLRMLSQSPGLSSAELARHASVTPQAMNTVLRKLEDAGAVARPASVSSGRSLPATLTARGRALAKRAEAVVRAADARVLARLTAPQQREFKRMLEKLGSD</sequence>
<proteinExistence type="inferred from homology"/>
<evidence type="ECO:0000250" key="1">
    <source>
        <dbReference type="UniProtKB" id="P9WME9"/>
    </source>
</evidence>
<evidence type="ECO:0000255" key="2">
    <source>
        <dbReference type="PROSITE-ProRule" id="PRU00345"/>
    </source>
</evidence>
<accession>P9WME8</accession>
<accession>L0TCJ1</accession>
<accession>P67747</accession>
<accession>Q10810</accession>
<comment type="function">
    <text evidence="1">Represses expression of the HQNO methyltransferase htm gene by binding to its promoter region.</text>
</comment>
<comment type="subunit">
    <text evidence="1">Homodimer.</text>
</comment>
<feature type="chain" id="PRO_0000427316" description="HTH-type transcriptional repressor MT2955">
    <location>
        <begin position="1"/>
        <end position="139"/>
    </location>
</feature>
<feature type="domain" description="HTH marR-type" evidence="2">
    <location>
        <begin position="6"/>
        <end position="138"/>
    </location>
</feature>
<organism>
    <name type="scientific">Mycobacterium tuberculosis (strain CDC 1551 / Oshkosh)</name>
    <dbReference type="NCBI Taxonomy" id="83331"/>
    <lineage>
        <taxon>Bacteria</taxon>
        <taxon>Bacillati</taxon>
        <taxon>Actinomycetota</taxon>
        <taxon>Actinomycetes</taxon>
        <taxon>Mycobacteriales</taxon>
        <taxon>Mycobacteriaceae</taxon>
        <taxon>Mycobacterium</taxon>
        <taxon>Mycobacterium tuberculosis complex</taxon>
    </lineage>
</organism>
<reference key="1">
    <citation type="journal article" date="2002" name="J. Bacteriol.">
        <title>Whole-genome comparison of Mycobacterium tuberculosis clinical and laboratory strains.</title>
        <authorList>
            <person name="Fleischmann R.D."/>
            <person name="Alland D."/>
            <person name="Eisen J.A."/>
            <person name="Carpenter L."/>
            <person name="White O."/>
            <person name="Peterson J.D."/>
            <person name="DeBoy R.T."/>
            <person name="Dodson R.J."/>
            <person name="Gwinn M.L."/>
            <person name="Haft D.H."/>
            <person name="Hickey E.K."/>
            <person name="Kolonay J.F."/>
            <person name="Nelson W.C."/>
            <person name="Umayam L.A."/>
            <person name="Ermolaeva M.D."/>
            <person name="Salzberg S.L."/>
            <person name="Delcher A."/>
            <person name="Utterback T.R."/>
            <person name="Weidman J.F."/>
            <person name="Khouri H.M."/>
            <person name="Gill J."/>
            <person name="Mikula A."/>
            <person name="Bishai W."/>
            <person name="Jacobs W.R. Jr."/>
            <person name="Venter J.C."/>
            <person name="Fraser C.M."/>
        </authorList>
    </citation>
    <scope>NUCLEOTIDE SEQUENCE [LARGE SCALE GENOMIC DNA]</scope>
    <source>
        <strain>CDC 1551 / Oshkosh</strain>
    </source>
</reference>
<keyword id="KW-0238">DNA-binding</keyword>
<keyword id="KW-1185">Reference proteome</keyword>
<keyword id="KW-0678">Repressor</keyword>
<keyword id="KW-0804">Transcription</keyword>
<keyword id="KW-0805">Transcription regulation</keyword>
<dbReference type="EMBL" id="AE000516">
    <property type="protein sequence ID" value="AAK47280.1"/>
    <property type="molecule type" value="Genomic_DNA"/>
</dbReference>
<dbReference type="PIR" id="B70925">
    <property type="entry name" value="B70925"/>
</dbReference>
<dbReference type="RefSeq" id="WP_003899525.1">
    <property type="nucleotide sequence ID" value="NZ_KK341227.1"/>
</dbReference>
<dbReference type="SMR" id="P9WME8"/>
<dbReference type="KEGG" id="mtc:MT2955"/>
<dbReference type="PATRIC" id="fig|83331.31.peg.3192"/>
<dbReference type="HOGENOM" id="CLU_083287_4_4_11"/>
<dbReference type="Proteomes" id="UP000001020">
    <property type="component" value="Chromosome"/>
</dbReference>
<dbReference type="GO" id="GO:0003677">
    <property type="term" value="F:DNA binding"/>
    <property type="evidence" value="ECO:0007669"/>
    <property type="project" value="UniProtKB-KW"/>
</dbReference>
<dbReference type="GO" id="GO:0003700">
    <property type="term" value="F:DNA-binding transcription factor activity"/>
    <property type="evidence" value="ECO:0007669"/>
    <property type="project" value="InterPro"/>
</dbReference>
<dbReference type="GO" id="GO:0006950">
    <property type="term" value="P:response to stress"/>
    <property type="evidence" value="ECO:0007669"/>
    <property type="project" value="TreeGrafter"/>
</dbReference>
<dbReference type="Gene3D" id="1.10.10.10">
    <property type="entry name" value="Winged helix-like DNA-binding domain superfamily/Winged helix DNA-binding domain"/>
    <property type="match status" value="1"/>
</dbReference>
<dbReference type="InterPro" id="IPR000835">
    <property type="entry name" value="HTH_MarR-typ"/>
</dbReference>
<dbReference type="InterPro" id="IPR039422">
    <property type="entry name" value="MarR/SlyA-like"/>
</dbReference>
<dbReference type="InterPro" id="IPR023187">
    <property type="entry name" value="Tscrpt_reg_MarR-type_CS"/>
</dbReference>
<dbReference type="InterPro" id="IPR036388">
    <property type="entry name" value="WH-like_DNA-bd_sf"/>
</dbReference>
<dbReference type="InterPro" id="IPR036390">
    <property type="entry name" value="WH_DNA-bd_sf"/>
</dbReference>
<dbReference type="PANTHER" id="PTHR33164:SF43">
    <property type="entry name" value="HTH-TYPE TRANSCRIPTIONAL REPRESSOR YETL"/>
    <property type="match status" value="1"/>
</dbReference>
<dbReference type="PANTHER" id="PTHR33164">
    <property type="entry name" value="TRANSCRIPTIONAL REGULATOR, MARR FAMILY"/>
    <property type="match status" value="1"/>
</dbReference>
<dbReference type="Pfam" id="PF01047">
    <property type="entry name" value="MarR"/>
    <property type="match status" value="1"/>
</dbReference>
<dbReference type="PRINTS" id="PR00598">
    <property type="entry name" value="HTHMARR"/>
</dbReference>
<dbReference type="SMART" id="SM00347">
    <property type="entry name" value="HTH_MARR"/>
    <property type="match status" value="1"/>
</dbReference>
<dbReference type="SUPFAM" id="SSF46785">
    <property type="entry name" value="Winged helix' DNA-binding domain"/>
    <property type="match status" value="1"/>
</dbReference>
<dbReference type="PROSITE" id="PS01117">
    <property type="entry name" value="HTH_MARR_1"/>
    <property type="match status" value="1"/>
</dbReference>
<dbReference type="PROSITE" id="PS50995">
    <property type="entry name" value="HTH_MARR_2"/>
    <property type="match status" value="1"/>
</dbReference>